<protein>
    <recommendedName>
        <fullName evidence="1">tRNA pseudouridine synthase A</fullName>
        <ecNumber evidence="1">5.4.99.12</ecNumber>
    </recommendedName>
    <alternativeName>
        <fullName evidence="1">tRNA pseudouridine(38-40) synthase</fullName>
    </alternativeName>
    <alternativeName>
        <fullName evidence="1">tRNA pseudouridylate synthase I</fullName>
    </alternativeName>
    <alternativeName>
        <fullName evidence="1">tRNA-uridine isomerase I</fullName>
    </alternativeName>
</protein>
<dbReference type="EC" id="5.4.99.12" evidence="1"/>
<dbReference type="EMBL" id="AM260522">
    <property type="protein sequence ID" value="CAJ99249.1"/>
    <property type="molecule type" value="Genomic_DNA"/>
</dbReference>
<dbReference type="RefSeq" id="WP_011577363.1">
    <property type="nucleotide sequence ID" value="NC_008229.1"/>
</dbReference>
<dbReference type="SMR" id="Q17YM7"/>
<dbReference type="STRING" id="382638.Hac_0414"/>
<dbReference type="GeneID" id="31757921"/>
<dbReference type="KEGG" id="hac:Hac_0414"/>
<dbReference type="eggNOG" id="COG0101">
    <property type="taxonomic scope" value="Bacteria"/>
</dbReference>
<dbReference type="HOGENOM" id="CLU_014673_0_1_7"/>
<dbReference type="OrthoDB" id="9811823at2"/>
<dbReference type="BioCyc" id="HACI382638:HAC_RS01885-MONOMER"/>
<dbReference type="Proteomes" id="UP000000775">
    <property type="component" value="Chromosome"/>
</dbReference>
<dbReference type="GO" id="GO:0003723">
    <property type="term" value="F:RNA binding"/>
    <property type="evidence" value="ECO:0007669"/>
    <property type="project" value="InterPro"/>
</dbReference>
<dbReference type="GO" id="GO:0160147">
    <property type="term" value="F:tRNA pseudouridine(38-40) synthase activity"/>
    <property type="evidence" value="ECO:0007669"/>
    <property type="project" value="UniProtKB-EC"/>
</dbReference>
<dbReference type="GO" id="GO:0031119">
    <property type="term" value="P:tRNA pseudouridine synthesis"/>
    <property type="evidence" value="ECO:0007669"/>
    <property type="project" value="UniProtKB-UniRule"/>
</dbReference>
<dbReference type="CDD" id="cd02570">
    <property type="entry name" value="PseudoU_synth_EcTruA"/>
    <property type="match status" value="1"/>
</dbReference>
<dbReference type="FunFam" id="3.30.70.580:FF:000023">
    <property type="entry name" value="tRNA pseudouridine synthase A"/>
    <property type="match status" value="1"/>
</dbReference>
<dbReference type="Gene3D" id="3.30.70.660">
    <property type="entry name" value="Pseudouridine synthase I, catalytic domain, C-terminal subdomain"/>
    <property type="match status" value="1"/>
</dbReference>
<dbReference type="Gene3D" id="3.30.70.580">
    <property type="entry name" value="Pseudouridine synthase I, catalytic domain, N-terminal subdomain"/>
    <property type="match status" value="1"/>
</dbReference>
<dbReference type="HAMAP" id="MF_00171">
    <property type="entry name" value="TruA"/>
    <property type="match status" value="1"/>
</dbReference>
<dbReference type="InterPro" id="IPR020103">
    <property type="entry name" value="PsdUridine_synth_cat_dom_sf"/>
</dbReference>
<dbReference type="InterPro" id="IPR001406">
    <property type="entry name" value="PsdUridine_synth_TruA"/>
</dbReference>
<dbReference type="InterPro" id="IPR020097">
    <property type="entry name" value="PsdUridine_synth_TruA_a/b_dom"/>
</dbReference>
<dbReference type="InterPro" id="IPR020095">
    <property type="entry name" value="PsdUridine_synth_TruA_C"/>
</dbReference>
<dbReference type="InterPro" id="IPR020094">
    <property type="entry name" value="TruA/RsuA/RluB/E/F_N"/>
</dbReference>
<dbReference type="NCBIfam" id="TIGR00071">
    <property type="entry name" value="hisT_truA"/>
    <property type="match status" value="1"/>
</dbReference>
<dbReference type="PANTHER" id="PTHR11142">
    <property type="entry name" value="PSEUDOURIDYLATE SYNTHASE"/>
    <property type="match status" value="1"/>
</dbReference>
<dbReference type="PANTHER" id="PTHR11142:SF0">
    <property type="entry name" value="TRNA PSEUDOURIDINE SYNTHASE-LIKE 1"/>
    <property type="match status" value="1"/>
</dbReference>
<dbReference type="Pfam" id="PF01416">
    <property type="entry name" value="PseudoU_synth_1"/>
    <property type="match status" value="2"/>
</dbReference>
<dbReference type="PIRSF" id="PIRSF001430">
    <property type="entry name" value="tRNA_psdUrid_synth"/>
    <property type="match status" value="1"/>
</dbReference>
<dbReference type="SUPFAM" id="SSF55120">
    <property type="entry name" value="Pseudouridine synthase"/>
    <property type="match status" value="1"/>
</dbReference>
<accession>Q17YM7</accession>
<name>TRUA_HELAH</name>
<gene>
    <name evidence="1" type="primary">truA</name>
    <name type="ordered locus">Hac_0414</name>
</gene>
<organism>
    <name type="scientific">Helicobacter acinonychis (strain Sheeba)</name>
    <dbReference type="NCBI Taxonomy" id="382638"/>
    <lineage>
        <taxon>Bacteria</taxon>
        <taxon>Pseudomonadati</taxon>
        <taxon>Campylobacterota</taxon>
        <taxon>Epsilonproteobacteria</taxon>
        <taxon>Campylobacterales</taxon>
        <taxon>Helicobacteraceae</taxon>
        <taxon>Helicobacter</taxon>
    </lineage>
</organism>
<feature type="chain" id="PRO_1000017092" description="tRNA pseudouridine synthase A">
    <location>
        <begin position="1"/>
        <end position="242"/>
    </location>
</feature>
<feature type="active site" description="Nucleophile" evidence="1">
    <location>
        <position position="51"/>
    </location>
</feature>
<feature type="binding site" evidence="1">
    <location>
        <position position="107"/>
    </location>
    <ligand>
        <name>substrate</name>
    </ligand>
</feature>
<keyword id="KW-0413">Isomerase</keyword>
<keyword id="KW-0819">tRNA processing</keyword>
<evidence type="ECO:0000255" key="1">
    <source>
        <dbReference type="HAMAP-Rule" id="MF_00171"/>
    </source>
</evidence>
<proteinExistence type="inferred from homology"/>
<reference key="1">
    <citation type="journal article" date="2006" name="PLoS Genet.">
        <title>Who ate whom? Adaptive Helicobacter genomic changes that accompanied a host jump from early humans to large felines.</title>
        <authorList>
            <person name="Eppinger M."/>
            <person name="Baar C."/>
            <person name="Linz B."/>
            <person name="Raddatz G."/>
            <person name="Lanz C."/>
            <person name="Keller H."/>
            <person name="Morelli G."/>
            <person name="Gressmann H."/>
            <person name="Achtman M."/>
            <person name="Schuster S.C."/>
        </authorList>
    </citation>
    <scope>NUCLEOTIDE SEQUENCE [LARGE SCALE GENOMIC DNA]</scope>
    <source>
        <strain>Sheeba</strain>
    </source>
</reference>
<comment type="function">
    <text evidence="1">Formation of pseudouridine at positions 38, 39 and 40 in the anticodon stem and loop of transfer RNAs.</text>
</comment>
<comment type="catalytic activity">
    <reaction evidence="1">
        <text>uridine(38/39/40) in tRNA = pseudouridine(38/39/40) in tRNA</text>
        <dbReference type="Rhea" id="RHEA:22376"/>
        <dbReference type="Rhea" id="RHEA-COMP:10085"/>
        <dbReference type="Rhea" id="RHEA-COMP:10087"/>
        <dbReference type="ChEBI" id="CHEBI:65314"/>
        <dbReference type="ChEBI" id="CHEBI:65315"/>
        <dbReference type="EC" id="5.4.99.12"/>
    </reaction>
</comment>
<comment type="subunit">
    <text evidence="1">Homodimer.</text>
</comment>
<comment type="similarity">
    <text evidence="1">Belongs to the tRNA pseudouridine synthase TruA family.</text>
</comment>
<sequence>MRCFKATIAYDGAYFLGYAKQPDKLGVQDKIESALNLLGIKSVVIAAGRTDKGVHANNQVLSFHAQKHWSADKLFYYLAPKLAPHIVLKKLEEKNFHARFDAQKRAYRYLLTKSLKTPFLAPYIACGDYGSLDSLNTALKQFIGKHDFSMFKKEGGAATNPKRIIFNAFAYKASIMGHECVVFKIIGDAFLRSSVRLIMQACVQYSLEKITLAEIKTQINNIKATIRTPIMANGLYLHRVHY</sequence>